<feature type="chain" id="PRO_0000148865" description="Aspartyl/glutamyl-tRNA(Asn/Gln) amidotransferase subunit B">
    <location>
        <begin position="1"/>
        <end position="474"/>
    </location>
</feature>
<reference key="1">
    <citation type="journal article" date="2004" name="PLoS Biol.">
        <title>Phylogenomics of the reproductive parasite Wolbachia pipientis wMel: a streamlined genome overrun by mobile genetic elements.</title>
        <authorList>
            <person name="Wu M."/>
            <person name="Sun L.V."/>
            <person name="Vamathevan J.J."/>
            <person name="Riegler M."/>
            <person name="DeBoy R.T."/>
            <person name="Brownlie J.C."/>
            <person name="McGraw E.A."/>
            <person name="Martin W."/>
            <person name="Esser C."/>
            <person name="Ahmadinejad N."/>
            <person name="Wiegand C."/>
            <person name="Madupu R."/>
            <person name="Beanan M.J."/>
            <person name="Brinkac L.M."/>
            <person name="Daugherty S.C."/>
            <person name="Durkin A.S."/>
            <person name="Kolonay J.F."/>
            <person name="Nelson W.C."/>
            <person name="Mohamoud Y."/>
            <person name="Lee P."/>
            <person name="Berry K.J."/>
            <person name="Young M.B."/>
            <person name="Utterback T.R."/>
            <person name="Weidman J.F."/>
            <person name="Nierman W.C."/>
            <person name="Paulsen I.T."/>
            <person name="Nelson K.E."/>
            <person name="Tettelin H."/>
            <person name="O'Neill S.L."/>
            <person name="Eisen J.A."/>
        </authorList>
    </citation>
    <scope>NUCLEOTIDE SEQUENCE [LARGE SCALE GENOMIC DNA]</scope>
</reference>
<name>GATB_WOLPM</name>
<organism>
    <name type="scientific">Wolbachia pipientis wMel</name>
    <dbReference type="NCBI Taxonomy" id="163164"/>
    <lineage>
        <taxon>Bacteria</taxon>
        <taxon>Pseudomonadati</taxon>
        <taxon>Pseudomonadota</taxon>
        <taxon>Alphaproteobacteria</taxon>
        <taxon>Rickettsiales</taxon>
        <taxon>Anaplasmataceae</taxon>
        <taxon>Wolbachieae</taxon>
        <taxon>Wolbachia</taxon>
    </lineage>
</organism>
<sequence length="474" mass="53259">MTKEDWEAVIGLEVHAQVSSNTKLFSSSSTEFGAEHNTQVSLVDAAMPGTLPILNYYCIEQAIRTGLALSAEINKYSYFDRKNYFYPDLPQGYQITQFFEPIVKNGRVFINDNEKEIRIARIHLEQDAGKSVHEESKTYVDLNRAGVALMEIVSEPDLRSSAEAAECMKKLRQILRYIGSCDGDMEKGSLRCDANVSVRLKGSSTFGTRCEIKNLNSIRYIVQAIDYEIQRQIEILESGEEISQDTLLFDVASGKTKVMRSKEDASDYRYFPEPDLLPVEVSQDKIDLIQSSLPELPDQKKLRYIEELGINEYDANVITSDKAIADYFEELIKKHDSKLAVTWLTVELFGRLNKAGIDIVSSPIKANALSELLDFIVDGTISAKLGKQVFDSMFETGKPASLIIEEQGLKQITDRGQISEVIDKIINNNQDKVQEYKSGKTKLYGFFVGEVMKLTKGKASPDVVNSILSERLSN</sequence>
<accession>P61349</accession>
<comment type="function">
    <text evidence="1">Allows the formation of correctly charged Asn-tRNA(Asn) or Gln-tRNA(Gln) through the transamidation of misacylated Asp-tRNA(Asn) or Glu-tRNA(Gln) in organisms which lack either or both of asparaginyl-tRNA or glutaminyl-tRNA synthetases. The reaction takes place in the presence of glutamine and ATP through an activated phospho-Asp-tRNA(Asn) or phospho-Glu-tRNA(Gln).</text>
</comment>
<comment type="catalytic activity">
    <reaction evidence="1">
        <text>L-glutamyl-tRNA(Gln) + L-glutamine + ATP + H2O = L-glutaminyl-tRNA(Gln) + L-glutamate + ADP + phosphate + H(+)</text>
        <dbReference type="Rhea" id="RHEA:17521"/>
        <dbReference type="Rhea" id="RHEA-COMP:9681"/>
        <dbReference type="Rhea" id="RHEA-COMP:9684"/>
        <dbReference type="ChEBI" id="CHEBI:15377"/>
        <dbReference type="ChEBI" id="CHEBI:15378"/>
        <dbReference type="ChEBI" id="CHEBI:29985"/>
        <dbReference type="ChEBI" id="CHEBI:30616"/>
        <dbReference type="ChEBI" id="CHEBI:43474"/>
        <dbReference type="ChEBI" id="CHEBI:58359"/>
        <dbReference type="ChEBI" id="CHEBI:78520"/>
        <dbReference type="ChEBI" id="CHEBI:78521"/>
        <dbReference type="ChEBI" id="CHEBI:456216"/>
    </reaction>
</comment>
<comment type="catalytic activity">
    <reaction evidence="1">
        <text>L-aspartyl-tRNA(Asn) + L-glutamine + ATP + H2O = L-asparaginyl-tRNA(Asn) + L-glutamate + ADP + phosphate + 2 H(+)</text>
        <dbReference type="Rhea" id="RHEA:14513"/>
        <dbReference type="Rhea" id="RHEA-COMP:9674"/>
        <dbReference type="Rhea" id="RHEA-COMP:9677"/>
        <dbReference type="ChEBI" id="CHEBI:15377"/>
        <dbReference type="ChEBI" id="CHEBI:15378"/>
        <dbReference type="ChEBI" id="CHEBI:29985"/>
        <dbReference type="ChEBI" id="CHEBI:30616"/>
        <dbReference type="ChEBI" id="CHEBI:43474"/>
        <dbReference type="ChEBI" id="CHEBI:58359"/>
        <dbReference type="ChEBI" id="CHEBI:78515"/>
        <dbReference type="ChEBI" id="CHEBI:78516"/>
        <dbReference type="ChEBI" id="CHEBI:456216"/>
    </reaction>
</comment>
<comment type="subunit">
    <text evidence="1">Heterotrimer of A, B and C subunits.</text>
</comment>
<comment type="similarity">
    <text evidence="1">Belongs to the GatB/GatE family. GatB subfamily.</text>
</comment>
<proteinExistence type="inferred from homology"/>
<dbReference type="EC" id="6.3.5.-" evidence="1"/>
<dbReference type="EMBL" id="AE017196">
    <property type="protein sequence ID" value="AAS13898.1"/>
    <property type="molecule type" value="Genomic_DNA"/>
</dbReference>
<dbReference type="RefSeq" id="WP_010962393.1">
    <property type="nucleotide sequence ID" value="NZ_OX384529.1"/>
</dbReference>
<dbReference type="SMR" id="P61349"/>
<dbReference type="EnsemblBacteria" id="AAS13898">
    <property type="protein sequence ID" value="AAS13898"/>
    <property type="gene ID" value="WD_0146"/>
</dbReference>
<dbReference type="GeneID" id="70035637"/>
<dbReference type="KEGG" id="wol:WD_0146"/>
<dbReference type="eggNOG" id="COG0064">
    <property type="taxonomic scope" value="Bacteria"/>
</dbReference>
<dbReference type="Proteomes" id="UP000008215">
    <property type="component" value="Chromosome"/>
</dbReference>
<dbReference type="GO" id="GO:0050566">
    <property type="term" value="F:asparaginyl-tRNA synthase (glutamine-hydrolyzing) activity"/>
    <property type="evidence" value="ECO:0007669"/>
    <property type="project" value="RHEA"/>
</dbReference>
<dbReference type="GO" id="GO:0005524">
    <property type="term" value="F:ATP binding"/>
    <property type="evidence" value="ECO:0007669"/>
    <property type="project" value="UniProtKB-KW"/>
</dbReference>
<dbReference type="GO" id="GO:0050567">
    <property type="term" value="F:glutaminyl-tRNA synthase (glutamine-hydrolyzing) activity"/>
    <property type="evidence" value="ECO:0007669"/>
    <property type="project" value="UniProtKB-UniRule"/>
</dbReference>
<dbReference type="GO" id="GO:0070681">
    <property type="term" value="P:glutaminyl-tRNAGln biosynthesis via transamidation"/>
    <property type="evidence" value="ECO:0007669"/>
    <property type="project" value="TreeGrafter"/>
</dbReference>
<dbReference type="GO" id="GO:0006412">
    <property type="term" value="P:translation"/>
    <property type="evidence" value="ECO:0007669"/>
    <property type="project" value="UniProtKB-UniRule"/>
</dbReference>
<dbReference type="FunFam" id="1.10.10.410:FF:000001">
    <property type="entry name" value="Aspartyl/glutamyl-tRNA(Asn/Gln) amidotransferase subunit B"/>
    <property type="match status" value="1"/>
</dbReference>
<dbReference type="FunFam" id="1.10.150.380:FF:000001">
    <property type="entry name" value="Aspartyl/glutamyl-tRNA(Asn/Gln) amidotransferase subunit B"/>
    <property type="match status" value="1"/>
</dbReference>
<dbReference type="Gene3D" id="1.10.10.410">
    <property type="match status" value="1"/>
</dbReference>
<dbReference type="Gene3D" id="1.10.150.380">
    <property type="entry name" value="GatB domain, N-terminal subdomain"/>
    <property type="match status" value="1"/>
</dbReference>
<dbReference type="HAMAP" id="MF_00121">
    <property type="entry name" value="GatB"/>
    <property type="match status" value="1"/>
</dbReference>
<dbReference type="InterPro" id="IPR017959">
    <property type="entry name" value="Asn/Gln-tRNA_amidoTrfase_suB/E"/>
</dbReference>
<dbReference type="InterPro" id="IPR006075">
    <property type="entry name" value="Asn/Gln-tRNA_Trfase_suB/E_cat"/>
</dbReference>
<dbReference type="InterPro" id="IPR018027">
    <property type="entry name" value="Asn/Gln_amidotransferase"/>
</dbReference>
<dbReference type="InterPro" id="IPR003789">
    <property type="entry name" value="Asn/Gln_tRNA_amidoTrase-B-like"/>
</dbReference>
<dbReference type="InterPro" id="IPR004413">
    <property type="entry name" value="GatB"/>
</dbReference>
<dbReference type="InterPro" id="IPR042114">
    <property type="entry name" value="GatB_C_1"/>
</dbReference>
<dbReference type="InterPro" id="IPR023168">
    <property type="entry name" value="GatB_Yqey_C_2"/>
</dbReference>
<dbReference type="InterPro" id="IPR017958">
    <property type="entry name" value="Gln-tRNA_amidoTrfase_suB_CS"/>
</dbReference>
<dbReference type="InterPro" id="IPR014746">
    <property type="entry name" value="Gln_synth/guanido_kin_cat_dom"/>
</dbReference>
<dbReference type="NCBIfam" id="TIGR00133">
    <property type="entry name" value="gatB"/>
    <property type="match status" value="1"/>
</dbReference>
<dbReference type="NCBIfam" id="NF004012">
    <property type="entry name" value="PRK05477.1-2"/>
    <property type="match status" value="1"/>
</dbReference>
<dbReference type="NCBIfam" id="NF004014">
    <property type="entry name" value="PRK05477.1-4"/>
    <property type="match status" value="1"/>
</dbReference>
<dbReference type="NCBIfam" id="NF004015">
    <property type="entry name" value="PRK05477.1-5"/>
    <property type="match status" value="1"/>
</dbReference>
<dbReference type="PANTHER" id="PTHR11659">
    <property type="entry name" value="GLUTAMYL-TRNA GLN AMIDOTRANSFERASE SUBUNIT B MITOCHONDRIAL AND PROKARYOTIC PET112-RELATED"/>
    <property type="match status" value="1"/>
</dbReference>
<dbReference type="PANTHER" id="PTHR11659:SF0">
    <property type="entry name" value="GLUTAMYL-TRNA(GLN) AMIDOTRANSFERASE SUBUNIT B, MITOCHONDRIAL"/>
    <property type="match status" value="1"/>
</dbReference>
<dbReference type="Pfam" id="PF02934">
    <property type="entry name" value="GatB_N"/>
    <property type="match status" value="1"/>
</dbReference>
<dbReference type="Pfam" id="PF02637">
    <property type="entry name" value="GatB_Yqey"/>
    <property type="match status" value="1"/>
</dbReference>
<dbReference type="SMART" id="SM00845">
    <property type="entry name" value="GatB_Yqey"/>
    <property type="match status" value="1"/>
</dbReference>
<dbReference type="SUPFAM" id="SSF89095">
    <property type="entry name" value="GatB/YqeY motif"/>
    <property type="match status" value="1"/>
</dbReference>
<dbReference type="SUPFAM" id="SSF55931">
    <property type="entry name" value="Glutamine synthetase/guanido kinase"/>
    <property type="match status" value="1"/>
</dbReference>
<dbReference type="PROSITE" id="PS01234">
    <property type="entry name" value="GATB"/>
    <property type="match status" value="1"/>
</dbReference>
<protein>
    <recommendedName>
        <fullName evidence="1">Aspartyl/glutamyl-tRNA(Asn/Gln) amidotransferase subunit B</fullName>
        <shortName evidence="1">Asp/Glu-ADT subunit B</shortName>
        <ecNumber evidence="1">6.3.5.-</ecNumber>
    </recommendedName>
</protein>
<gene>
    <name evidence="1" type="primary">gatB</name>
    <name type="ordered locus">WD_0146</name>
</gene>
<keyword id="KW-0067">ATP-binding</keyword>
<keyword id="KW-0436">Ligase</keyword>
<keyword id="KW-0547">Nucleotide-binding</keyword>
<keyword id="KW-0648">Protein biosynthesis</keyword>
<evidence type="ECO:0000255" key="1">
    <source>
        <dbReference type="HAMAP-Rule" id="MF_00121"/>
    </source>
</evidence>